<sequence>MQRTYEVMFIVRPDLTDEDLDKLVSTLETQVGTAGGTIKSVDKMGKRRLAYEVSTFTDGMYILFTIEGEGALIKEVERRLRVQEQVIKFITVRVDEEQKRLAKVKAIRDTKVRGKGTRAAEQAAAAEAAAPAAAPAEPASAEPAPAV</sequence>
<organism>
    <name type="scientific">Koribacter versatilis (strain Ellin345)</name>
    <dbReference type="NCBI Taxonomy" id="204669"/>
    <lineage>
        <taxon>Bacteria</taxon>
        <taxon>Pseudomonadati</taxon>
        <taxon>Acidobacteriota</taxon>
        <taxon>Terriglobia</taxon>
        <taxon>Terriglobales</taxon>
        <taxon>Candidatus Korobacteraceae</taxon>
        <taxon>Candidatus Korobacter</taxon>
    </lineage>
</organism>
<proteinExistence type="inferred from homology"/>
<comment type="function">
    <text evidence="1">Binds together with bS18 to 16S ribosomal RNA.</text>
</comment>
<comment type="similarity">
    <text evidence="1">Belongs to the bacterial ribosomal protein bS6 family.</text>
</comment>
<gene>
    <name evidence="1" type="primary">rpsF</name>
    <name type="ordered locus">Acid345_4537</name>
</gene>
<feature type="chain" id="PRO_1000005203" description="Small ribosomal subunit protein bS6">
    <location>
        <begin position="1"/>
        <end position="147"/>
    </location>
</feature>
<feature type="region of interest" description="Disordered" evidence="2">
    <location>
        <begin position="114"/>
        <end position="147"/>
    </location>
</feature>
<feature type="compositionally biased region" description="Low complexity" evidence="2">
    <location>
        <begin position="119"/>
        <end position="147"/>
    </location>
</feature>
<evidence type="ECO:0000255" key="1">
    <source>
        <dbReference type="HAMAP-Rule" id="MF_00360"/>
    </source>
</evidence>
<evidence type="ECO:0000256" key="2">
    <source>
        <dbReference type="SAM" id="MobiDB-lite"/>
    </source>
</evidence>
<evidence type="ECO:0000305" key="3"/>
<accession>Q1IHW3</accession>
<keyword id="KW-1185">Reference proteome</keyword>
<keyword id="KW-0687">Ribonucleoprotein</keyword>
<keyword id="KW-0689">Ribosomal protein</keyword>
<keyword id="KW-0694">RNA-binding</keyword>
<keyword id="KW-0699">rRNA-binding</keyword>
<protein>
    <recommendedName>
        <fullName evidence="1">Small ribosomal subunit protein bS6</fullName>
    </recommendedName>
    <alternativeName>
        <fullName evidence="3">30S ribosomal protein S6</fullName>
    </alternativeName>
</protein>
<reference key="1">
    <citation type="journal article" date="2009" name="Appl. Environ. Microbiol.">
        <title>Three genomes from the phylum Acidobacteria provide insight into the lifestyles of these microorganisms in soils.</title>
        <authorList>
            <person name="Ward N.L."/>
            <person name="Challacombe J.F."/>
            <person name="Janssen P.H."/>
            <person name="Henrissat B."/>
            <person name="Coutinho P.M."/>
            <person name="Wu M."/>
            <person name="Xie G."/>
            <person name="Haft D.H."/>
            <person name="Sait M."/>
            <person name="Badger J."/>
            <person name="Barabote R.D."/>
            <person name="Bradley B."/>
            <person name="Brettin T.S."/>
            <person name="Brinkac L.M."/>
            <person name="Bruce D."/>
            <person name="Creasy T."/>
            <person name="Daugherty S.C."/>
            <person name="Davidsen T.M."/>
            <person name="DeBoy R.T."/>
            <person name="Detter J.C."/>
            <person name="Dodson R.J."/>
            <person name="Durkin A.S."/>
            <person name="Ganapathy A."/>
            <person name="Gwinn-Giglio M."/>
            <person name="Han C.S."/>
            <person name="Khouri H."/>
            <person name="Kiss H."/>
            <person name="Kothari S.P."/>
            <person name="Madupu R."/>
            <person name="Nelson K.E."/>
            <person name="Nelson W.C."/>
            <person name="Paulsen I."/>
            <person name="Penn K."/>
            <person name="Ren Q."/>
            <person name="Rosovitz M.J."/>
            <person name="Selengut J.D."/>
            <person name="Shrivastava S."/>
            <person name="Sullivan S.A."/>
            <person name="Tapia R."/>
            <person name="Thompson L.S."/>
            <person name="Watkins K.L."/>
            <person name="Yang Q."/>
            <person name="Yu C."/>
            <person name="Zafar N."/>
            <person name="Zhou L."/>
            <person name="Kuske C.R."/>
        </authorList>
    </citation>
    <scope>NUCLEOTIDE SEQUENCE [LARGE SCALE GENOMIC DNA]</scope>
    <source>
        <strain>Ellin345</strain>
    </source>
</reference>
<dbReference type="EMBL" id="CP000360">
    <property type="protein sequence ID" value="ABF43537.1"/>
    <property type="molecule type" value="Genomic_DNA"/>
</dbReference>
<dbReference type="RefSeq" id="WP_011525334.1">
    <property type="nucleotide sequence ID" value="NC_008009.1"/>
</dbReference>
<dbReference type="SMR" id="Q1IHW3"/>
<dbReference type="STRING" id="204669.Acid345_4537"/>
<dbReference type="EnsemblBacteria" id="ABF43537">
    <property type="protein sequence ID" value="ABF43537"/>
    <property type="gene ID" value="Acid345_4537"/>
</dbReference>
<dbReference type="KEGG" id="aba:Acid345_4537"/>
<dbReference type="eggNOG" id="COG0360">
    <property type="taxonomic scope" value="Bacteria"/>
</dbReference>
<dbReference type="HOGENOM" id="CLU_113441_4_0_0"/>
<dbReference type="OrthoDB" id="9812702at2"/>
<dbReference type="Proteomes" id="UP000002432">
    <property type="component" value="Chromosome"/>
</dbReference>
<dbReference type="GO" id="GO:0005737">
    <property type="term" value="C:cytoplasm"/>
    <property type="evidence" value="ECO:0007669"/>
    <property type="project" value="UniProtKB-ARBA"/>
</dbReference>
<dbReference type="GO" id="GO:1990904">
    <property type="term" value="C:ribonucleoprotein complex"/>
    <property type="evidence" value="ECO:0007669"/>
    <property type="project" value="UniProtKB-KW"/>
</dbReference>
<dbReference type="GO" id="GO:0005840">
    <property type="term" value="C:ribosome"/>
    <property type="evidence" value="ECO:0007669"/>
    <property type="project" value="UniProtKB-KW"/>
</dbReference>
<dbReference type="GO" id="GO:0070181">
    <property type="term" value="F:small ribosomal subunit rRNA binding"/>
    <property type="evidence" value="ECO:0007669"/>
    <property type="project" value="TreeGrafter"/>
</dbReference>
<dbReference type="GO" id="GO:0003735">
    <property type="term" value="F:structural constituent of ribosome"/>
    <property type="evidence" value="ECO:0007669"/>
    <property type="project" value="InterPro"/>
</dbReference>
<dbReference type="GO" id="GO:0006412">
    <property type="term" value="P:translation"/>
    <property type="evidence" value="ECO:0007669"/>
    <property type="project" value="UniProtKB-UniRule"/>
</dbReference>
<dbReference type="CDD" id="cd00473">
    <property type="entry name" value="bS6"/>
    <property type="match status" value="1"/>
</dbReference>
<dbReference type="Gene3D" id="3.30.70.60">
    <property type="match status" value="1"/>
</dbReference>
<dbReference type="HAMAP" id="MF_00360">
    <property type="entry name" value="Ribosomal_bS6"/>
    <property type="match status" value="1"/>
</dbReference>
<dbReference type="InterPro" id="IPR000529">
    <property type="entry name" value="Ribosomal_bS6"/>
</dbReference>
<dbReference type="InterPro" id="IPR035980">
    <property type="entry name" value="Ribosomal_bS6_sf"/>
</dbReference>
<dbReference type="InterPro" id="IPR020814">
    <property type="entry name" value="Ribosomal_S6_plastid/chlpt"/>
</dbReference>
<dbReference type="InterPro" id="IPR014717">
    <property type="entry name" value="Transl_elong_EF1B/ribsomal_bS6"/>
</dbReference>
<dbReference type="NCBIfam" id="TIGR00166">
    <property type="entry name" value="S6"/>
    <property type="match status" value="1"/>
</dbReference>
<dbReference type="PANTHER" id="PTHR21011">
    <property type="entry name" value="MITOCHONDRIAL 28S RIBOSOMAL PROTEIN S6"/>
    <property type="match status" value="1"/>
</dbReference>
<dbReference type="PANTHER" id="PTHR21011:SF1">
    <property type="entry name" value="SMALL RIBOSOMAL SUBUNIT PROTEIN BS6M"/>
    <property type="match status" value="1"/>
</dbReference>
<dbReference type="Pfam" id="PF01250">
    <property type="entry name" value="Ribosomal_S6"/>
    <property type="match status" value="1"/>
</dbReference>
<dbReference type="SUPFAM" id="SSF54995">
    <property type="entry name" value="Ribosomal protein S6"/>
    <property type="match status" value="1"/>
</dbReference>
<name>RS6_KORVE</name>